<protein>
    <recommendedName>
        <fullName evidence="1">Phosphoglucosamine mutase</fullName>
        <ecNumber evidence="1">5.4.2.10</ecNumber>
    </recommendedName>
</protein>
<evidence type="ECO:0000255" key="1">
    <source>
        <dbReference type="HAMAP-Rule" id="MF_01554"/>
    </source>
</evidence>
<comment type="function">
    <text evidence="1">Catalyzes the conversion of glucosamine-6-phosphate to glucosamine-1-phosphate.</text>
</comment>
<comment type="catalytic activity">
    <reaction evidence="1">
        <text>alpha-D-glucosamine 1-phosphate = D-glucosamine 6-phosphate</text>
        <dbReference type="Rhea" id="RHEA:23424"/>
        <dbReference type="ChEBI" id="CHEBI:58516"/>
        <dbReference type="ChEBI" id="CHEBI:58725"/>
        <dbReference type="EC" id="5.4.2.10"/>
    </reaction>
</comment>
<comment type="cofactor">
    <cofactor evidence="1">
        <name>Mg(2+)</name>
        <dbReference type="ChEBI" id="CHEBI:18420"/>
    </cofactor>
    <text evidence="1">Binds 1 Mg(2+) ion per subunit.</text>
</comment>
<comment type="PTM">
    <text evidence="1">Activated by phosphorylation.</text>
</comment>
<comment type="similarity">
    <text evidence="1">Belongs to the phosphohexose mutase family.</text>
</comment>
<feature type="chain" id="PRO_1000068890" description="Phosphoglucosamine mutase">
    <location>
        <begin position="1"/>
        <end position="452"/>
    </location>
</feature>
<feature type="active site" description="Phosphoserine intermediate" evidence="1">
    <location>
        <position position="108"/>
    </location>
</feature>
<feature type="binding site" description="via phosphate group" evidence="1">
    <location>
        <position position="108"/>
    </location>
    <ligand>
        <name>Mg(2+)</name>
        <dbReference type="ChEBI" id="CHEBI:18420"/>
    </ligand>
</feature>
<feature type="binding site" evidence="1">
    <location>
        <position position="247"/>
    </location>
    <ligand>
        <name>Mg(2+)</name>
        <dbReference type="ChEBI" id="CHEBI:18420"/>
    </ligand>
</feature>
<feature type="binding site" evidence="1">
    <location>
        <position position="249"/>
    </location>
    <ligand>
        <name>Mg(2+)</name>
        <dbReference type="ChEBI" id="CHEBI:18420"/>
    </ligand>
</feature>
<feature type="binding site" evidence="1">
    <location>
        <position position="251"/>
    </location>
    <ligand>
        <name>Mg(2+)</name>
        <dbReference type="ChEBI" id="CHEBI:18420"/>
    </ligand>
</feature>
<feature type="modified residue" description="Phosphoserine" evidence="1">
    <location>
        <position position="108"/>
    </location>
</feature>
<accession>A2S3Q4</accession>
<dbReference type="EC" id="5.4.2.10" evidence="1"/>
<dbReference type="EMBL" id="CP000546">
    <property type="protein sequence ID" value="ABN02024.1"/>
    <property type="molecule type" value="Genomic_DNA"/>
</dbReference>
<dbReference type="RefSeq" id="WP_004266863.1">
    <property type="nucleotide sequence ID" value="NC_008836.1"/>
</dbReference>
<dbReference type="SMR" id="A2S3Q4"/>
<dbReference type="GeneID" id="93059857"/>
<dbReference type="KEGG" id="bml:BMA10229_A0578"/>
<dbReference type="HOGENOM" id="CLU_016950_7_0_4"/>
<dbReference type="Proteomes" id="UP000002283">
    <property type="component" value="Chromosome I"/>
</dbReference>
<dbReference type="GO" id="GO:0005829">
    <property type="term" value="C:cytosol"/>
    <property type="evidence" value="ECO:0007669"/>
    <property type="project" value="TreeGrafter"/>
</dbReference>
<dbReference type="GO" id="GO:0000287">
    <property type="term" value="F:magnesium ion binding"/>
    <property type="evidence" value="ECO:0007669"/>
    <property type="project" value="UniProtKB-UniRule"/>
</dbReference>
<dbReference type="GO" id="GO:0008966">
    <property type="term" value="F:phosphoglucosamine mutase activity"/>
    <property type="evidence" value="ECO:0007669"/>
    <property type="project" value="UniProtKB-UniRule"/>
</dbReference>
<dbReference type="GO" id="GO:0004615">
    <property type="term" value="F:phosphomannomutase activity"/>
    <property type="evidence" value="ECO:0007669"/>
    <property type="project" value="TreeGrafter"/>
</dbReference>
<dbReference type="GO" id="GO:0005975">
    <property type="term" value="P:carbohydrate metabolic process"/>
    <property type="evidence" value="ECO:0007669"/>
    <property type="project" value="InterPro"/>
</dbReference>
<dbReference type="GO" id="GO:0009252">
    <property type="term" value="P:peptidoglycan biosynthetic process"/>
    <property type="evidence" value="ECO:0007669"/>
    <property type="project" value="TreeGrafter"/>
</dbReference>
<dbReference type="GO" id="GO:0006048">
    <property type="term" value="P:UDP-N-acetylglucosamine biosynthetic process"/>
    <property type="evidence" value="ECO:0007669"/>
    <property type="project" value="TreeGrafter"/>
</dbReference>
<dbReference type="CDD" id="cd05802">
    <property type="entry name" value="GlmM"/>
    <property type="match status" value="1"/>
</dbReference>
<dbReference type="FunFam" id="3.30.310.50:FF:000001">
    <property type="entry name" value="Phosphoglucosamine mutase"/>
    <property type="match status" value="1"/>
</dbReference>
<dbReference type="FunFam" id="3.40.120.10:FF:000001">
    <property type="entry name" value="Phosphoglucosamine mutase"/>
    <property type="match status" value="1"/>
</dbReference>
<dbReference type="FunFam" id="3.40.120.10:FF:000003">
    <property type="entry name" value="Phosphoglucosamine mutase"/>
    <property type="match status" value="1"/>
</dbReference>
<dbReference type="Gene3D" id="3.40.120.10">
    <property type="entry name" value="Alpha-D-Glucose-1,6-Bisphosphate, subunit A, domain 3"/>
    <property type="match status" value="3"/>
</dbReference>
<dbReference type="Gene3D" id="3.30.310.50">
    <property type="entry name" value="Alpha-D-phosphohexomutase, C-terminal domain"/>
    <property type="match status" value="1"/>
</dbReference>
<dbReference type="HAMAP" id="MF_01554_B">
    <property type="entry name" value="GlmM_B"/>
    <property type="match status" value="1"/>
</dbReference>
<dbReference type="InterPro" id="IPR005844">
    <property type="entry name" value="A-D-PHexomutase_a/b/a-I"/>
</dbReference>
<dbReference type="InterPro" id="IPR016055">
    <property type="entry name" value="A-D-PHexomutase_a/b/a-I/II/III"/>
</dbReference>
<dbReference type="InterPro" id="IPR005845">
    <property type="entry name" value="A-D-PHexomutase_a/b/a-II"/>
</dbReference>
<dbReference type="InterPro" id="IPR005846">
    <property type="entry name" value="A-D-PHexomutase_a/b/a-III"/>
</dbReference>
<dbReference type="InterPro" id="IPR005843">
    <property type="entry name" value="A-D-PHexomutase_C"/>
</dbReference>
<dbReference type="InterPro" id="IPR036900">
    <property type="entry name" value="A-D-PHexomutase_C_sf"/>
</dbReference>
<dbReference type="InterPro" id="IPR016066">
    <property type="entry name" value="A-D-PHexomutase_CS"/>
</dbReference>
<dbReference type="InterPro" id="IPR005841">
    <property type="entry name" value="Alpha-D-phosphohexomutase_SF"/>
</dbReference>
<dbReference type="InterPro" id="IPR006352">
    <property type="entry name" value="GlmM_bact"/>
</dbReference>
<dbReference type="InterPro" id="IPR050060">
    <property type="entry name" value="Phosphoglucosamine_mutase"/>
</dbReference>
<dbReference type="NCBIfam" id="TIGR01455">
    <property type="entry name" value="glmM"/>
    <property type="match status" value="1"/>
</dbReference>
<dbReference type="NCBIfam" id="NF008139">
    <property type="entry name" value="PRK10887.1"/>
    <property type="match status" value="1"/>
</dbReference>
<dbReference type="PANTHER" id="PTHR42946:SF1">
    <property type="entry name" value="PHOSPHOGLUCOMUTASE (ALPHA-D-GLUCOSE-1,6-BISPHOSPHATE-DEPENDENT)"/>
    <property type="match status" value="1"/>
</dbReference>
<dbReference type="PANTHER" id="PTHR42946">
    <property type="entry name" value="PHOSPHOHEXOSE MUTASE"/>
    <property type="match status" value="1"/>
</dbReference>
<dbReference type="Pfam" id="PF02878">
    <property type="entry name" value="PGM_PMM_I"/>
    <property type="match status" value="1"/>
</dbReference>
<dbReference type="Pfam" id="PF02879">
    <property type="entry name" value="PGM_PMM_II"/>
    <property type="match status" value="1"/>
</dbReference>
<dbReference type="Pfam" id="PF02880">
    <property type="entry name" value="PGM_PMM_III"/>
    <property type="match status" value="1"/>
</dbReference>
<dbReference type="Pfam" id="PF00408">
    <property type="entry name" value="PGM_PMM_IV"/>
    <property type="match status" value="1"/>
</dbReference>
<dbReference type="PRINTS" id="PR00509">
    <property type="entry name" value="PGMPMM"/>
</dbReference>
<dbReference type="SUPFAM" id="SSF55957">
    <property type="entry name" value="Phosphoglucomutase, C-terminal domain"/>
    <property type="match status" value="1"/>
</dbReference>
<dbReference type="SUPFAM" id="SSF53738">
    <property type="entry name" value="Phosphoglucomutase, first 3 domains"/>
    <property type="match status" value="3"/>
</dbReference>
<dbReference type="PROSITE" id="PS00710">
    <property type="entry name" value="PGM_PMM"/>
    <property type="match status" value="1"/>
</dbReference>
<proteinExistence type="inferred from homology"/>
<gene>
    <name evidence="1" type="primary">glmM</name>
    <name type="ordered locus">BMA10229_A0578</name>
</gene>
<organism>
    <name type="scientific">Burkholderia mallei (strain NCTC 10229)</name>
    <dbReference type="NCBI Taxonomy" id="412022"/>
    <lineage>
        <taxon>Bacteria</taxon>
        <taxon>Pseudomonadati</taxon>
        <taxon>Pseudomonadota</taxon>
        <taxon>Betaproteobacteria</taxon>
        <taxon>Burkholderiales</taxon>
        <taxon>Burkholderiaceae</taxon>
        <taxon>Burkholderia</taxon>
        <taxon>pseudomallei group</taxon>
    </lineage>
</organism>
<sequence length="452" mass="47624">MGRRYFGTDGIRGKVGDAPITPDFVLRLGYAAGKVLASAPGRAASGARPTVLIGKDTRVSGYMLEAALEAGFSAAGVDVMLAGPMPTPGVAYLTRALRLSAGVVISASHNPYHDNGIKFFSADGNKLPDEIEAEIEAWLDKPLDCAASDGLGKARRLDDAAGRYIEFCKSTFPAAFDLRGMKLVVDCAHGAAYQVAPHVFHELGADVIPIGVAPNGFNINDGVGATAPDALMRAVRANHADLGIALDGDADRLLVVDHTGRLYNGDELLYVLVKDRIATNGQVEGAVGTLMTNFAVEVALKEAGVQFVRAAVGDRYVLEQLRERGWQLGAEGSGHILSLDRHSTGDGIVSALLVLAALKRSGKTLAQMLEGVTLFPQKLINVRMKPGADWKGSEAIRRAIDSAEQALSGSGRVLIRASGTEPVLRVMVEARQATDANRHAEAIADAVKQATA</sequence>
<reference key="1">
    <citation type="journal article" date="2010" name="Genome Biol. Evol.">
        <title>Continuing evolution of Burkholderia mallei through genome reduction and large-scale rearrangements.</title>
        <authorList>
            <person name="Losada L."/>
            <person name="Ronning C.M."/>
            <person name="DeShazer D."/>
            <person name="Woods D."/>
            <person name="Fedorova N."/>
            <person name="Kim H.S."/>
            <person name="Shabalina S.A."/>
            <person name="Pearson T.R."/>
            <person name="Brinkac L."/>
            <person name="Tan P."/>
            <person name="Nandi T."/>
            <person name="Crabtree J."/>
            <person name="Badger J."/>
            <person name="Beckstrom-Sternberg S."/>
            <person name="Saqib M."/>
            <person name="Schutzer S.E."/>
            <person name="Keim P."/>
            <person name="Nierman W.C."/>
        </authorList>
    </citation>
    <scope>NUCLEOTIDE SEQUENCE [LARGE SCALE GENOMIC DNA]</scope>
    <source>
        <strain>NCTC 10229</strain>
    </source>
</reference>
<name>GLMM_BURM9</name>
<keyword id="KW-0413">Isomerase</keyword>
<keyword id="KW-0460">Magnesium</keyword>
<keyword id="KW-0479">Metal-binding</keyword>
<keyword id="KW-0597">Phosphoprotein</keyword>